<accession>Q8TE76</accession>
<accession>A1YR23</accession>
<accession>A1YR24</accession>
<accession>H7BXF1</accession>
<accession>Q5JUK7</accession>
<accession>Q96MZ2</accession>
<accession>Q9HAI7</accession>
<keyword id="KW-0002">3D-structure</keyword>
<keyword id="KW-0025">Alternative splicing</keyword>
<keyword id="KW-0175">Coiled coil</keyword>
<keyword id="KW-0479">Metal-binding</keyword>
<keyword id="KW-0539">Nucleus</keyword>
<keyword id="KW-1267">Proteomics identification</keyword>
<keyword id="KW-1185">Reference proteome</keyword>
<keyword id="KW-0862">Zinc</keyword>
<keyword id="KW-0863">Zinc-finger</keyword>
<comment type="function">
    <text evidence="6">Histone methylation reader which binds to non-methylated (H3K4me0), monomethylated (H3K4me1), dimethylated (H3K4me2) and trimethylated (H3K4me3) 'Lys-4' on histone H3 (PubMed:26933034). The order of binding preference is H3K4me3 &gt; H3K4me2 &gt; H3K4me1 &gt; H3K4me0 (PubMed:26933034).</text>
</comment>
<comment type="interaction">
    <interactant intactId="EBI-3940432">
        <id>Q8TE76</id>
    </interactant>
    <interactant intactId="EBI-518675">
        <id>P40763</id>
        <label>STAT3</label>
    </interactant>
    <organismsDiffer>false</organismsDiffer>
    <experiments>2</experiments>
</comment>
<comment type="subcellular location">
    <subcellularLocation>
        <location evidence="9">Nucleus</location>
    </subcellularLocation>
</comment>
<comment type="alternative products">
    <event type="alternative splicing"/>
    <isoform>
        <id>Q8TE76-1</id>
        <name>1</name>
        <sequence type="displayed"/>
    </isoform>
    <isoform>
        <id>Q8TE76-2</id>
        <name>2</name>
        <sequence type="described" ref="VSP_045025 VSP_045026"/>
    </isoform>
    <isoform>
        <id>Q8TE76-3</id>
        <name>3</name>
        <sequence type="described" ref="VSP_045026"/>
    </isoform>
</comment>
<comment type="tissue specificity">
    <text evidence="5">Expressed at low levels in normal tissues, with highest expression levels in placenta and testis. Expression is significantly increased in subset of diffuse large B-cell lymphomas.</text>
</comment>
<comment type="domain">
    <text evidence="6">The CW-TYPE zinc finger mediates its binding to trimethylated histone H3K4me3.</text>
</comment>
<comment type="sequence caution" evidence="8">
    <conflict type="erroneous initiation">
        <sequence resource="EMBL-CDS" id="BAB13859"/>
    </conflict>
</comment>
<comment type="sequence caution" evidence="8">
    <conflict type="erroneous initiation">
        <sequence resource="EMBL-CDS" id="BAB71125"/>
    </conflict>
</comment>
<protein>
    <recommendedName>
        <fullName>MORC family CW-type zinc finger protein 4</fullName>
    </recommendedName>
    <alternativeName>
        <fullName>Zinc finger CW-type coiled-coil domain protein 2</fullName>
    </alternativeName>
    <alternativeName>
        <fullName>Zinc finger CW-type domain protein 4</fullName>
    </alternativeName>
</protein>
<organism>
    <name type="scientific">Homo sapiens</name>
    <name type="common">Human</name>
    <dbReference type="NCBI Taxonomy" id="9606"/>
    <lineage>
        <taxon>Eukaryota</taxon>
        <taxon>Metazoa</taxon>
        <taxon>Chordata</taxon>
        <taxon>Craniata</taxon>
        <taxon>Vertebrata</taxon>
        <taxon>Euteleostomi</taxon>
        <taxon>Mammalia</taxon>
        <taxon>Eutheria</taxon>
        <taxon>Euarchontoglires</taxon>
        <taxon>Primates</taxon>
        <taxon>Haplorrhini</taxon>
        <taxon>Catarrhini</taxon>
        <taxon>Hominidae</taxon>
        <taxon>Homo</taxon>
    </lineage>
</organism>
<name>MORC4_HUMAN</name>
<reference key="1">
    <citation type="journal article" date="2007" name="Br. J. Haematol.">
        <title>MORC4, a novel member of the MORC family, is highly expressed in a subset of diffuse large B-cell lymphomas.</title>
        <authorList>
            <person name="Liggins A.P."/>
            <person name="Cooper C.D."/>
            <person name="Lawrie C.H."/>
            <person name="Brown P.J."/>
            <person name="Collins G.P."/>
            <person name="Hatton C.S."/>
            <person name="Pulford K."/>
            <person name="Banham A.H."/>
        </authorList>
    </citation>
    <scope>NUCLEOTIDE SEQUENCE [MRNA] (ISOFORMS 2 AND 3)</scope>
    <scope>SUBCELLULAR LOCATION</scope>
    <scope>TISSUE SPECIFICITY</scope>
    <scope>ALTERNATIVE SPLICING</scope>
    <source>
        <tissue>Testis</tissue>
    </source>
</reference>
<reference key="2">
    <citation type="journal article" date="2005" name="Nature">
        <title>The DNA sequence of the human X chromosome.</title>
        <authorList>
            <person name="Ross M.T."/>
            <person name="Grafham D.V."/>
            <person name="Coffey A.J."/>
            <person name="Scherer S."/>
            <person name="McLay K."/>
            <person name="Muzny D."/>
            <person name="Platzer M."/>
            <person name="Howell G.R."/>
            <person name="Burrows C."/>
            <person name="Bird C.P."/>
            <person name="Frankish A."/>
            <person name="Lovell F.L."/>
            <person name="Howe K.L."/>
            <person name="Ashurst J.L."/>
            <person name="Fulton R.S."/>
            <person name="Sudbrak R."/>
            <person name="Wen G."/>
            <person name="Jones M.C."/>
            <person name="Hurles M.E."/>
            <person name="Andrews T.D."/>
            <person name="Scott C.E."/>
            <person name="Searle S."/>
            <person name="Ramser J."/>
            <person name="Whittaker A."/>
            <person name="Deadman R."/>
            <person name="Carter N.P."/>
            <person name="Hunt S.E."/>
            <person name="Chen R."/>
            <person name="Cree A."/>
            <person name="Gunaratne P."/>
            <person name="Havlak P."/>
            <person name="Hodgson A."/>
            <person name="Metzker M.L."/>
            <person name="Richards S."/>
            <person name="Scott G."/>
            <person name="Steffen D."/>
            <person name="Sodergren E."/>
            <person name="Wheeler D.A."/>
            <person name="Worley K.C."/>
            <person name="Ainscough R."/>
            <person name="Ambrose K.D."/>
            <person name="Ansari-Lari M.A."/>
            <person name="Aradhya S."/>
            <person name="Ashwell R.I."/>
            <person name="Babbage A.K."/>
            <person name="Bagguley C.L."/>
            <person name="Ballabio A."/>
            <person name="Banerjee R."/>
            <person name="Barker G.E."/>
            <person name="Barlow K.F."/>
            <person name="Barrett I.P."/>
            <person name="Bates K.N."/>
            <person name="Beare D.M."/>
            <person name="Beasley H."/>
            <person name="Beasley O."/>
            <person name="Beck A."/>
            <person name="Bethel G."/>
            <person name="Blechschmidt K."/>
            <person name="Brady N."/>
            <person name="Bray-Allen S."/>
            <person name="Bridgeman A.M."/>
            <person name="Brown A.J."/>
            <person name="Brown M.J."/>
            <person name="Bonnin D."/>
            <person name="Bruford E.A."/>
            <person name="Buhay C."/>
            <person name="Burch P."/>
            <person name="Burford D."/>
            <person name="Burgess J."/>
            <person name="Burrill W."/>
            <person name="Burton J."/>
            <person name="Bye J.M."/>
            <person name="Carder C."/>
            <person name="Carrel L."/>
            <person name="Chako J."/>
            <person name="Chapman J.C."/>
            <person name="Chavez D."/>
            <person name="Chen E."/>
            <person name="Chen G."/>
            <person name="Chen Y."/>
            <person name="Chen Z."/>
            <person name="Chinault C."/>
            <person name="Ciccodicola A."/>
            <person name="Clark S.Y."/>
            <person name="Clarke G."/>
            <person name="Clee C.M."/>
            <person name="Clegg S."/>
            <person name="Clerc-Blankenburg K."/>
            <person name="Clifford K."/>
            <person name="Cobley V."/>
            <person name="Cole C.G."/>
            <person name="Conquer J.S."/>
            <person name="Corby N."/>
            <person name="Connor R.E."/>
            <person name="David R."/>
            <person name="Davies J."/>
            <person name="Davis C."/>
            <person name="Davis J."/>
            <person name="Delgado O."/>
            <person name="Deshazo D."/>
            <person name="Dhami P."/>
            <person name="Ding Y."/>
            <person name="Dinh H."/>
            <person name="Dodsworth S."/>
            <person name="Draper H."/>
            <person name="Dugan-Rocha S."/>
            <person name="Dunham A."/>
            <person name="Dunn M."/>
            <person name="Durbin K.J."/>
            <person name="Dutta I."/>
            <person name="Eades T."/>
            <person name="Ellwood M."/>
            <person name="Emery-Cohen A."/>
            <person name="Errington H."/>
            <person name="Evans K.L."/>
            <person name="Faulkner L."/>
            <person name="Francis F."/>
            <person name="Frankland J."/>
            <person name="Fraser A.E."/>
            <person name="Galgoczy P."/>
            <person name="Gilbert J."/>
            <person name="Gill R."/>
            <person name="Gloeckner G."/>
            <person name="Gregory S.G."/>
            <person name="Gribble S."/>
            <person name="Griffiths C."/>
            <person name="Grocock R."/>
            <person name="Gu Y."/>
            <person name="Gwilliam R."/>
            <person name="Hamilton C."/>
            <person name="Hart E.A."/>
            <person name="Hawes A."/>
            <person name="Heath P.D."/>
            <person name="Heitmann K."/>
            <person name="Hennig S."/>
            <person name="Hernandez J."/>
            <person name="Hinzmann B."/>
            <person name="Ho S."/>
            <person name="Hoffs M."/>
            <person name="Howden P.J."/>
            <person name="Huckle E.J."/>
            <person name="Hume J."/>
            <person name="Hunt P.J."/>
            <person name="Hunt A.R."/>
            <person name="Isherwood J."/>
            <person name="Jacob L."/>
            <person name="Johnson D."/>
            <person name="Jones S."/>
            <person name="de Jong P.J."/>
            <person name="Joseph S.S."/>
            <person name="Keenan S."/>
            <person name="Kelly S."/>
            <person name="Kershaw J.K."/>
            <person name="Khan Z."/>
            <person name="Kioschis P."/>
            <person name="Klages S."/>
            <person name="Knights A.J."/>
            <person name="Kosiura A."/>
            <person name="Kovar-Smith C."/>
            <person name="Laird G.K."/>
            <person name="Langford C."/>
            <person name="Lawlor S."/>
            <person name="Leversha M."/>
            <person name="Lewis L."/>
            <person name="Liu W."/>
            <person name="Lloyd C."/>
            <person name="Lloyd D.M."/>
            <person name="Loulseged H."/>
            <person name="Loveland J.E."/>
            <person name="Lovell J.D."/>
            <person name="Lozado R."/>
            <person name="Lu J."/>
            <person name="Lyne R."/>
            <person name="Ma J."/>
            <person name="Maheshwari M."/>
            <person name="Matthews L.H."/>
            <person name="McDowall J."/>
            <person name="McLaren S."/>
            <person name="McMurray A."/>
            <person name="Meidl P."/>
            <person name="Meitinger T."/>
            <person name="Milne S."/>
            <person name="Miner G."/>
            <person name="Mistry S.L."/>
            <person name="Morgan M."/>
            <person name="Morris S."/>
            <person name="Mueller I."/>
            <person name="Mullikin J.C."/>
            <person name="Nguyen N."/>
            <person name="Nordsiek G."/>
            <person name="Nyakatura G."/>
            <person name="O'dell C.N."/>
            <person name="Okwuonu G."/>
            <person name="Palmer S."/>
            <person name="Pandian R."/>
            <person name="Parker D."/>
            <person name="Parrish J."/>
            <person name="Pasternak S."/>
            <person name="Patel D."/>
            <person name="Pearce A.V."/>
            <person name="Pearson D.M."/>
            <person name="Pelan S.E."/>
            <person name="Perez L."/>
            <person name="Porter K.M."/>
            <person name="Ramsey Y."/>
            <person name="Reichwald K."/>
            <person name="Rhodes S."/>
            <person name="Ridler K.A."/>
            <person name="Schlessinger D."/>
            <person name="Schueler M.G."/>
            <person name="Sehra H.K."/>
            <person name="Shaw-Smith C."/>
            <person name="Shen H."/>
            <person name="Sheridan E.M."/>
            <person name="Shownkeen R."/>
            <person name="Skuce C.D."/>
            <person name="Smith M.L."/>
            <person name="Sotheran E.C."/>
            <person name="Steingruber H.E."/>
            <person name="Steward C.A."/>
            <person name="Storey R."/>
            <person name="Swann R.M."/>
            <person name="Swarbreck D."/>
            <person name="Tabor P.E."/>
            <person name="Taudien S."/>
            <person name="Taylor T."/>
            <person name="Teague B."/>
            <person name="Thomas K."/>
            <person name="Thorpe A."/>
            <person name="Timms K."/>
            <person name="Tracey A."/>
            <person name="Trevanion S."/>
            <person name="Tromans A.C."/>
            <person name="d'Urso M."/>
            <person name="Verduzco D."/>
            <person name="Villasana D."/>
            <person name="Waldron L."/>
            <person name="Wall M."/>
            <person name="Wang Q."/>
            <person name="Warren J."/>
            <person name="Warry G.L."/>
            <person name="Wei X."/>
            <person name="West A."/>
            <person name="Whitehead S.L."/>
            <person name="Whiteley M.N."/>
            <person name="Wilkinson J.E."/>
            <person name="Willey D.L."/>
            <person name="Williams G."/>
            <person name="Williams L."/>
            <person name="Williamson A."/>
            <person name="Williamson H."/>
            <person name="Wilming L."/>
            <person name="Woodmansey R.L."/>
            <person name="Wray P.W."/>
            <person name="Yen J."/>
            <person name="Zhang J."/>
            <person name="Zhou J."/>
            <person name="Zoghbi H."/>
            <person name="Zorilla S."/>
            <person name="Buck D."/>
            <person name="Reinhardt R."/>
            <person name="Poustka A."/>
            <person name="Rosenthal A."/>
            <person name="Lehrach H."/>
            <person name="Meindl A."/>
            <person name="Minx P.J."/>
            <person name="Hillier L.W."/>
            <person name="Willard H.F."/>
            <person name="Wilson R.K."/>
            <person name="Waterston R.H."/>
            <person name="Rice C.M."/>
            <person name="Vaudin M."/>
            <person name="Coulson A."/>
            <person name="Nelson D.L."/>
            <person name="Weinstock G."/>
            <person name="Sulston J.E."/>
            <person name="Durbin R.M."/>
            <person name="Hubbard T."/>
            <person name="Gibbs R.A."/>
            <person name="Beck S."/>
            <person name="Rogers J."/>
            <person name="Bentley D.R."/>
        </authorList>
    </citation>
    <scope>NUCLEOTIDE SEQUENCE [LARGE SCALE GENOMIC DNA]</scope>
</reference>
<reference key="3">
    <citation type="journal article" date="2004" name="Nat. Genet.">
        <title>Complete sequencing and characterization of 21,243 full-length human cDNAs.</title>
        <authorList>
            <person name="Ota T."/>
            <person name="Suzuki Y."/>
            <person name="Nishikawa T."/>
            <person name="Otsuki T."/>
            <person name="Sugiyama T."/>
            <person name="Irie R."/>
            <person name="Wakamatsu A."/>
            <person name="Hayashi K."/>
            <person name="Sato H."/>
            <person name="Nagai K."/>
            <person name="Kimura K."/>
            <person name="Makita H."/>
            <person name="Sekine M."/>
            <person name="Obayashi M."/>
            <person name="Nishi T."/>
            <person name="Shibahara T."/>
            <person name="Tanaka T."/>
            <person name="Ishii S."/>
            <person name="Yamamoto J."/>
            <person name="Saito K."/>
            <person name="Kawai Y."/>
            <person name="Isono Y."/>
            <person name="Nakamura Y."/>
            <person name="Nagahari K."/>
            <person name="Murakami K."/>
            <person name="Yasuda T."/>
            <person name="Iwayanagi T."/>
            <person name="Wagatsuma M."/>
            <person name="Shiratori A."/>
            <person name="Sudo H."/>
            <person name="Hosoiri T."/>
            <person name="Kaku Y."/>
            <person name="Kodaira H."/>
            <person name="Kondo H."/>
            <person name="Sugawara M."/>
            <person name="Takahashi M."/>
            <person name="Kanda K."/>
            <person name="Yokoi T."/>
            <person name="Furuya T."/>
            <person name="Kikkawa E."/>
            <person name="Omura Y."/>
            <person name="Abe K."/>
            <person name="Kamihara K."/>
            <person name="Katsuta N."/>
            <person name="Sato K."/>
            <person name="Tanikawa M."/>
            <person name="Yamazaki M."/>
            <person name="Ninomiya K."/>
            <person name="Ishibashi T."/>
            <person name="Yamashita H."/>
            <person name="Murakawa K."/>
            <person name="Fujimori K."/>
            <person name="Tanai H."/>
            <person name="Kimata M."/>
            <person name="Watanabe M."/>
            <person name="Hiraoka S."/>
            <person name="Chiba Y."/>
            <person name="Ishida S."/>
            <person name="Ono Y."/>
            <person name="Takiguchi S."/>
            <person name="Watanabe S."/>
            <person name="Yosida M."/>
            <person name="Hotuta T."/>
            <person name="Kusano J."/>
            <person name="Kanehori K."/>
            <person name="Takahashi-Fujii A."/>
            <person name="Hara H."/>
            <person name="Tanase T.-O."/>
            <person name="Nomura Y."/>
            <person name="Togiya S."/>
            <person name="Komai F."/>
            <person name="Hara R."/>
            <person name="Takeuchi K."/>
            <person name="Arita M."/>
            <person name="Imose N."/>
            <person name="Musashino K."/>
            <person name="Yuuki H."/>
            <person name="Oshima A."/>
            <person name="Sasaki N."/>
            <person name="Aotsuka S."/>
            <person name="Yoshikawa Y."/>
            <person name="Matsunawa H."/>
            <person name="Ichihara T."/>
            <person name="Shiohata N."/>
            <person name="Sano S."/>
            <person name="Moriya S."/>
            <person name="Momiyama H."/>
            <person name="Satoh N."/>
            <person name="Takami S."/>
            <person name="Terashima Y."/>
            <person name="Suzuki O."/>
            <person name="Nakagawa S."/>
            <person name="Senoh A."/>
            <person name="Mizoguchi H."/>
            <person name="Goto Y."/>
            <person name="Shimizu F."/>
            <person name="Wakebe H."/>
            <person name="Hishigaki H."/>
            <person name="Watanabe T."/>
            <person name="Sugiyama A."/>
            <person name="Takemoto M."/>
            <person name="Kawakami B."/>
            <person name="Yamazaki M."/>
            <person name="Watanabe K."/>
            <person name="Kumagai A."/>
            <person name="Itakura S."/>
            <person name="Fukuzumi Y."/>
            <person name="Fujimori Y."/>
            <person name="Komiyama M."/>
            <person name="Tashiro H."/>
            <person name="Tanigami A."/>
            <person name="Fujiwara T."/>
            <person name="Ono T."/>
            <person name="Yamada K."/>
            <person name="Fujii Y."/>
            <person name="Ozaki K."/>
            <person name="Hirao M."/>
            <person name="Ohmori Y."/>
            <person name="Kawabata A."/>
            <person name="Hikiji T."/>
            <person name="Kobatake N."/>
            <person name="Inagaki H."/>
            <person name="Ikema Y."/>
            <person name="Okamoto S."/>
            <person name="Okitani R."/>
            <person name="Kawakami T."/>
            <person name="Noguchi S."/>
            <person name="Itoh T."/>
            <person name="Shigeta K."/>
            <person name="Senba T."/>
            <person name="Matsumura K."/>
            <person name="Nakajima Y."/>
            <person name="Mizuno T."/>
            <person name="Morinaga M."/>
            <person name="Sasaki M."/>
            <person name="Togashi T."/>
            <person name="Oyama M."/>
            <person name="Hata H."/>
            <person name="Watanabe M."/>
            <person name="Komatsu T."/>
            <person name="Mizushima-Sugano J."/>
            <person name="Satoh T."/>
            <person name="Shirai Y."/>
            <person name="Takahashi Y."/>
            <person name="Nakagawa K."/>
            <person name="Okumura K."/>
            <person name="Nagase T."/>
            <person name="Nomura N."/>
            <person name="Kikuchi H."/>
            <person name="Masuho Y."/>
            <person name="Yamashita R."/>
            <person name="Nakai K."/>
            <person name="Yada T."/>
            <person name="Nakamura Y."/>
            <person name="Ohara O."/>
            <person name="Isogai T."/>
            <person name="Sugano S."/>
        </authorList>
    </citation>
    <scope>NUCLEOTIDE SEQUENCE [LARGE SCALE MRNA] OF 172-937 (ISOFORM 1)</scope>
    <scope>VARIANT ILE-473</scope>
    <source>
        <tissue>Embryo</tissue>
    </source>
</reference>
<reference key="4">
    <citation type="journal article" date="2016" name="J. Biol. Chem.">
        <title>Family-wide Characterization of Histone Binding Abilities of Human CW Domain-containing Proteins.</title>
        <authorList>
            <person name="Liu Y."/>
            <person name="Tempel W."/>
            <person name="Zhang Q."/>
            <person name="Liang X."/>
            <person name="Loppnau P."/>
            <person name="Qin S."/>
            <person name="Min J."/>
        </authorList>
    </citation>
    <scope>FUNCTION</scope>
    <scope>DOMAIN CW-TYPE ZINC FINGER</scope>
</reference>
<gene>
    <name type="primary">MORC4</name>
    <name type="synonym">ZCW4</name>
    <name type="synonym">ZCWCC2</name>
</gene>
<feature type="chain" id="PRO_0000096539" description="MORC family CW-type zinc finger protein 4">
    <location>
        <begin position="1"/>
        <end position="937"/>
    </location>
</feature>
<feature type="zinc finger region" description="CW-type" evidence="2">
    <location>
        <begin position="420"/>
        <end position="472"/>
    </location>
</feature>
<feature type="region of interest" description="Disordered" evidence="3">
    <location>
        <begin position="606"/>
        <end position="637"/>
    </location>
</feature>
<feature type="coiled-coil region" evidence="1">
    <location>
        <begin position="762"/>
        <end position="876"/>
    </location>
</feature>
<feature type="binding site" evidence="2">
    <location>
        <position position="429"/>
    </location>
    <ligand>
        <name>Zn(2+)</name>
        <dbReference type="ChEBI" id="CHEBI:29105"/>
    </ligand>
</feature>
<feature type="binding site" evidence="2">
    <location>
        <position position="432"/>
    </location>
    <ligand>
        <name>Zn(2+)</name>
        <dbReference type="ChEBI" id="CHEBI:29105"/>
    </ligand>
</feature>
<feature type="binding site" evidence="2">
    <location>
        <position position="453"/>
    </location>
    <ligand>
        <name>Zn(2+)</name>
        <dbReference type="ChEBI" id="CHEBI:29105"/>
    </ligand>
</feature>
<feature type="binding site" evidence="2">
    <location>
        <position position="464"/>
    </location>
    <ligand>
        <name>Zn(2+)</name>
        <dbReference type="ChEBI" id="CHEBI:29105"/>
    </ligand>
</feature>
<feature type="splice variant" id="VSP_045025" description="In isoform 2." evidence="7">
    <location>
        <begin position="1"/>
        <end position="252"/>
    </location>
</feature>
<feature type="splice variant" id="VSP_045026" description="In isoform 2 and isoform 3." evidence="7">
    <original>VSYRTPEGDDLERALAKLTRLRIHVSYLLTSVLPHLELREIGYDSEQVDGILYTVLEANHILD</original>
    <variation>GFGKAYAATYPRQLSPYFCPPSLGAS</variation>
    <location>
        <begin position="875"/>
        <end position="937"/>
    </location>
</feature>
<feature type="sequence variant" id="VAR_051197" description="In dbSNP:rs6622126." evidence="4">
    <original>T</original>
    <variation>I</variation>
    <location>
        <position position="473"/>
    </location>
</feature>
<feature type="sequence variant" id="VAR_051198" description="In dbSNP:rs3827464.">
    <original>R</original>
    <variation>C</variation>
    <location>
        <position position="653"/>
    </location>
</feature>
<feature type="sequence conflict" description="In Ref. 3; BAB71125." evidence="8" ref="3">
    <original>Y</original>
    <variation>H</variation>
    <location>
        <position position="307"/>
    </location>
</feature>
<feature type="sequence conflict" description="In Ref. 3; BAB13859." evidence="8" ref="3">
    <original>S</original>
    <variation>G</variation>
    <location>
        <position position="480"/>
    </location>
</feature>
<feature type="sequence conflict" description="In Ref. 1; ABL84747." evidence="8" ref="1">
    <original>G</original>
    <variation>E</variation>
    <location>
        <position position="519"/>
    </location>
</feature>
<feature type="helix" evidence="10">
    <location>
        <begin position="38"/>
        <end position="44"/>
    </location>
</feature>
<feature type="helix" evidence="10">
    <location>
        <begin position="50"/>
        <end position="62"/>
    </location>
</feature>
<feature type="turn" evidence="10">
    <location>
        <begin position="64"/>
        <end position="66"/>
    </location>
</feature>
<feature type="strand" evidence="10">
    <location>
        <begin position="69"/>
        <end position="77"/>
    </location>
</feature>
<feature type="strand" evidence="10">
    <location>
        <begin position="79"/>
        <end position="88"/>
    </location>
</feature>
<feature type="helix" evidence="10">
    <location>
        <begin position="95"/>
        <end position="101"/>
    </location>
</feature>
<feature type="strand" evidence="10">
    <location>
        <begin position="103"/>
        <end position="105"/>
    </location>
</feature>
<feature type="helix" evidence="10">
    <location>
        <begin position="124"/>
        <end position="132"/>
    </location>
</feature>
<feature type="strand" evidence="10">
    <location>
        <begin position="133"/>
        <end position="144"/>
    </location>
</feature>
<feature type="strand" evidence="10">
    <location>
        <begin position="146"/>
        <end position="152"/>
    </location>
</feature>
<feature type="helix" evidence="10">
    <location>
        <begin position="153"/>
        <end position="158"/>
    </location>
</feature>
<feature type="strand" evidence="10">
    <location>
        <begin position="168"/>
        <end position="170"/>
    </location>
</feature>
<feature type="helix" evidence="10">
    <location>
        <begin position="185"/>
        <end position="194"/>
    </location>
</feature>
<feature type="helix" evidence="10">
    <location>
        <begin position="200"/>
        <end position="205"/>
    </location>
</feature>
<feature type="helix" evidence="10">
    <location>
        <begin position="206"/>
        <end position="209"/>
    </location>
</feature>
<feature type="strand" evidence="10">
    <location>
        <begin position="210"/>
        <end position="223"/>
    </location>
</feature>
<feature type="strand" evidence="10">
    <location>
        <begin position="229"/>
        <end position="237"/>
    </location>
</feature>
<feature type="helix" evidence="10">
    <location>
        <begin position="263"/>
        <end position="265"/>
    </location>
</feature>
<feature type="helix" evidence="10">
    <location>
        <begin position="268"/>
        <end position="274"/>
    </location>
</feature>
<feature type="strand" evidence="10">
    <location>
        <begin position="275"/>
        <end position="278"/>
    </location>
</feature>
<feature type="strand" evidence="10">
    <location>
        <begin position="281"/>
        <end position="285"/>
    </location>
</feature>
<feature type="turn" evidence="10">
    <location>
        <begin position="295"/>
        <end position="298"/>
    </location>
</feature>
<feature type="strand" evidence="10">
    <location>
        <begin position="300"/>
        <end position="307"/>
    </location>
</feature>
<feature type="strand" evidence="10">
    <location>
        <begin position="316"/>
        <end position="322"/>
    </location>
</feature>
<feature type="strand" evidence="10">
    <location>
        <begin position="331"/>
        <end position="336"/>
    </location>
</feature>
<feature type="strand" evidence="10">
    <location>
        <begin position="339"/>
        <end position="342"/>
    </location>
</feature>
<feature type="strand" evidence="10">
    <location>
        <begin position="361"/>
        <end position="366"/>
    </location>
</feature>
<feature type="strand" evidence="10">
    <location>
        <begin position="376"/>
        <end position="379"/>
    </location>
</feature>
<feature type="helix" evidence="10">
    <location>
        <begin position="383"/>
        <end position="402"/>
    </location>
</feature>
<feature type="strand" evidence="10">
    <location>
        <begin position="425"/>
        <end position="428"/>
    </location>
</feature>
<feature type="turn" evidence="10">
    <location>
        <begin position="430"/>
        <end position="432"/>
    </location>
</feature>
<feature type="strand" evidence="10">
    <location>
        <begin position="435"/>
        <end position="440"/>
    </location>
</feature>
<feature type="helix" evidence="10">
    <location>
        <begin position="453"/>
        <end position="455"/>
    </location>
</feature>
<proteinExistence type="evidence at protein level"/>
<evidence type="ECO:0000255" key="1"/>
<evidence type="ECO:0000255" key="2">
    <source>
        <dbReference type="PROSITE-ProRule" id="PRU00454"/>
    </source>
</evidence>
<evidence type="ECO:0000256" key="3">
    <source>
        <dbReference type="SAM" id="MobiDB-lite"/>
    </source>
</evidence>
<evidence type="ECO:0000269" key="4">
    <source>
    </source>
</evidence>
<evidence type="ECO:0000269" key="5">
    <source>
    </source>
</evidence>
<evidence type="ECO:0000269" key="6">
    <source>
    </source>
</evidence>
<evidence type="ECO:0000303" key="7">
    <source>
    </source>
</evidence>
<evidence type="ECO:0000305" key="8"/>
<evidence type="ECO:0000305" key="9">
    <source>
    </source>
</evidence>
<evidence type="ECO:0007829" key="10">
    <source>
        <dbReference type="PDB" id="7K7T"/>
    </source>
</evidence>
<sequence length="937" mass="106348">MLLYRGAPAGPGAPGCGLARPGGGPQAFGIRLSTMSPRYLQSNSSSHTRPFSAIAELLDNAVDPDVSARTVFIDVEEVKNKSCLTFTDDGCGMTPHKLHRMLSFGFTDKVIKKSQCPIGVFGNGFKSGSMRLGKDALVFTKNGGTLTVGLLSQTYLECVQAQAVIVPIVPFNQQNKKMIITEDSLPSLEAILNYSIFNRENDLLAQFDAIPGKKGTRVLIWNIRRNKNGKSELDFDTDQYDILVSDFDTEEKMTGGVTSELPETEYSLRAFCGILYMKPRMKIFLRQKKVTTQMIAKSLANVEYDTYKPTFTNKQVRITFGFSCKNSNQFGIMMYHNNRLIKSFEKVGCQVKPTRGEGVGVIGVIECNFLKPAYNKQDFEYTKEYRLTINALAQKLNAYWKEKTSQDNFETSTVARPIPKVPDQTWVQCDECLKWRKLPGKIDPSMLPARWFCYYNSHPKYRRCSVPEEQELTDEDLCLSKAKKQEQTVEEKKKMPMENENHQVFSNPPKILTVQEMAGLNNKTIGYEGIHSPSVLPSGGEESRSPSLQLKPLDSSVLQFSSKYKWILGEEPVEKRRRLQNEMTTPSLDYSMPAPYRRVEAPVAYPEGENSHDKSSSERSTPPYLFPEYPEASKNTGQNREVSILYPGAKDQRQGSLLPEELEDQMPRLVAEESNRGSTTINKEEVNKGPFVAVVGVAKGVRDSGAPIQLIPFNREELAERRKAVESWNPVPYSVASAAIPAAAIGEKARGYEESEGHNTPKLKNQRELEELKRTTEKLERVLAERNLFQQKVEELEQERNHWQSEFKKVQHELVIYSTQEAEGLYWSKKHMGYRQAEFQILKAELERTKEEKQELKEKLKETETHLEMLQKAQVSYRTPEGDDLERALAKLTRLRIHVSYLLTSVLPHLELREIGYDSEQVDGILYTVLEANHILD</sequence>
<dbReference type="EMBL" id="EF125209">
    <property type="protein sequence ID" value="ABL84747.1"/>
    <property type="molecule type" value="mRNA"/>
</dbReference>
<dbReference type="EMBL" id="EF125210">
    <property type="protein sequence ID" value="ABL84748.1"/>
    <property type="molecule type" value="mRNA"/>
</dbReference>
<dbReference type="EMBL" id="AL158821">
    <property type="status" value="NOT_ANNOTATED_CDS"/>
    <property type="molecule type" value="Genomic_DNA"/>
</dbReference>
<dbReference type="EMBL" id="AK021627">
    <property type="protein sequence ID" value="BAB13859.1"/>
    <property type="status" value="ALT_INIT"/>
    <property type="molecule type" value="mRNA"/>
</dbReference>
<dbReference type="EMBL" id="AK056235">
    <property type="protein sequence ID" value="BAB71125.1"/>
    <property type="status" value="ALT_INIT"/>
    <property type="molecule type" value="mRNA"/>
</dbReference>
<dbReference type="CCDS" id="CCDS14525.2">
    <molecule id="Q8TE76-1"/>
</dbReference>
<dbReference type="CCDS" id="CCDS48146.1">
    <molecule id="Q8TE76-3"/>
</dbReference>
<dbReference type="RefSeq" id="NP_001078823.1">
    <molecule id="Q8TE76-3"/>
    <property type="nucleotide sequence ID" value="NM_001085354.3"/>
</dbReference>
<dbReference type="RefSeq" id="NP_078933.3">
    <molecule id="Q8TE76-1"/>
    <property type="nucleotide sequence ID" value="NM_024657.4"/>
</dbReference>
<dbReference type="PDB" id="7K7T">
    <property type="method" value="X-ray"/>
    <property type="resolution" value="2.94 A"/>
    <property type="chains" value="A/B=29-486"/>
</dbReference>
<dbReference type="PDBsum" id="7K7T"/>
<dbReference type="SMR" id="Q8TE76"/>
<dbReference type="BioGRID" id="122827">
    <property type="interactions" value="74"/>
</dbReference>
<dbReference type="FunCoup" id="Q8TE76">
    <property type="interactions" value="1352"/>
</dbReference>
<dbReference type="IntAct" id="Q8TE76">
    <property type="interactions" value="49"/>
</dbReference>
<dbReference type="MINT" id="Q8TE76"/>
<dbReference type="STRING" id="9606.ENSP00000347821"/>
<dbReference type="iPTMnet" id="Q8TE76"/>
<dbReference type="PhosphoSitePlus" id="Q8TE76"/>
<dbReference type="BioMuta" id="MORC4"/>
<dbReference type="DMDM" id="73920232"/>
<dbReference type="jPOST" id="Q8TE76"/>
<dbReference type="MassIVE" id="Q8TE76"/>
<dbReference type="PaxDb" id="9606-ENSP00000347821"/>
<dbReference type="PeptideAtlas" id="Q8TE76"/>
<dbReference type="ProteomicsDB" id="163"/>
<dbReference type="ProteomicsDB" id="43259"/>
<dbReference type="ProteomicsDB" id="74413">
    <molecule id="Q8TE76-1"/>
</dbReference>
<dbReference type="Pumba" id="Q8TE76"/>
<dbReference type="Antibodypedia" id="386">
    <property type="antibodies" value="26 antibodies from 10 providers"/>
</dbReference>
<dbReference type="DNASU" id="79710"/>
<dbReference type="Ensembl" id="ENST00000255495.7">
    <molecule id="Q8TE76-3"/>
    <property type="protein sequence ID" value="ENSP00000255495.7"/>
    <property type="gene ID" value="ENSG00000133131.15"/>
</dbReference>
<dbReference type="Ensembl" id="ENST00000355610.9">
    <molecule id="Q8TE76-1"/>
    <property type="protein sequence ID" value="ENSP00000347821.4"/>
    <property type="gene ID" value="ENSG00000133131.15"/>
</dbReference>
<dbReference type="GeneID" id="79710"/>
<dbReference type="KEGG" id="hsa:79710"/>
<dbReference type="MANE-Select" id="ENST00000355610.9">
    <property type="protein sequence ID" value="ENSP00000347821.4"/>
    <property type="RefSeq nucleotide sequence ID" value="NM_024657.5"/>
    <property type="RefSeq protein sequence ID" value="NP_078933.3"/>
</dbReference>
<dbReference type="UCSC" id="uc004emu.4">
    <molecule id="Q8TE76-1"/>
    <property type="organism name" value="human"/>
</dbReference>
<dbReference type="AGR" id="HGNC:23485"/>
<dbReference type="CTD" id="79710"/>
<dbReference type="DisGeNET" id="79710"/>
<dbReference type="GeneCards" id="MORC4"/>
<dbReference type="HGNC" id="HGNC:23485">
    <property type="gene designation" value="MORC4"/>
</dbReference>
<dbReference type="HPA" id="ENSG00000133131">
    <property type="expression patterns" value="Tissue enhanced (placenta)"/>
</dbReference>
<dbReference type="MIM" id="300970">
    <property type="type" value="gene"/>
</dbReference>
<dbReference type="neXtProt" id="NX_Q8TE76"/>
<dbReference type="OpenTargets" id="ENSG00000133131"/>
<dbReference type="PharmGKB" id="PA128394718"/>
<dbReference type="VEuPathDB" id="HostDB:ENSG00000133131"/>
<dbReference type="eggNOG" id="KOG1845">
    <property type="taxonomic scope" value="Eukaryota"/>
</dbReference>
<dbReference type="GeneTree" id="ENSGT00940000161221"/>
<dbReference type="HOGENOM" id="CLU_011516_3_0_1"/>
<dbReference type="InParanoid" id="Q8TE76"/>
<dbReference type="OMA" id="YKWIVGE"/>
<dbReference type="OrthoDB" id="757982at2759"/>
<dbReference type="PAN-GO" id="Q8TE76">
    <property type="GO annotations" value="3 GO annotations based on evolutionary models"/>
</dbReference>
<dbReference type="PhylomeDB" id="Q8TE76"/>
<dbReference type="TreeFam" id="TF329118"/>
<dbReference type="PathwayCommons" id="Q8TE76"/>
<dbReference type="SignaLink" id="Q8TE76"/>
<dbReference type="BioGRID-ORCS" id="79710">
    <property type="hits" value="16 hits in 780 CRISPR screens"/>
</dbReference>
<dbReference type="ChiTaRS" id="MORC4">
    <property type="organism name" value="human"/>
</dbReference>
<dbReference type="GenomeRNAi" id="79710"/>
<dbReference type="Pharos" id="Q8TE76">
    <property type="development level" value="Tbio"/>
</dbReference>
<dbReference type="PRO" id="PR:Q8TE76"/>
<dbReference type="Proteomes" id="UP000005640">
    <property type="component" value="Chromosome X"/>
</dbReference>
<dbReference type="RNAct" id="Q8TE76">
    <property type="molecule type" value="protein"/>
</dbReference>
<dbReference type="Bgee" id="ENSG00000133131">
    <property type="expression patterns" value="Expressed in colonic epithelium and 173 other cell types or tissues"/>
</dbReference>
<dbReference type="ExpressionAtlas" id="Q8TE76">
    <property type="expression patterns" value="baseline and differential"/>
</dbReference>
<dbReference type="GO" id="GO:0005654">
    <property type="term" value="C:nucleoplasm"/>
    <property type="evidence" value="ECO:0000314"/>
    <property type="project" value="HPA"/>
</dbReference>
<dbReference type="GO" id="GO:0005634">
    <property type="term" value="C:nucleus"/>
    <property type="evidence" value="ECO:0000318"/>
    <property type="project" value="GO_Central"/>
</dbReference>
<dbReference type="GO" id="GO:0016887">
    <property type="term" value="F:ATP hydrolysis activity"/>
    <property type="evidence" value="ECO:0007669"/>
    <property type="project" value="InterPro"/>
</dbReference>
<dbReference type="GO" id="GO:0140002">
    <property type="term" value="F:histone H3K4me3 reader activity"/>
    <property type="evidence" value="ECO:0000314"/>
    <property type="project" value="UniProtKB"/>
</dbReference>
<dbReference type="GO" id="GO:0035064">
    <property type="term" value="F:methylated histone binding"/>
    <property type="evidence" value="ECO:0000318"/>
    <property type="project" value="GO_Central"/>
</dbReference>
<dbReference type="GO" id="GO:0008270">
    <property type="term" value="F:zinc ion binding"/>
    <property type="evidence" value="ECO:0007669"/>
    <property type="project" value="UniProtKB-KW"/>
</dbReference>
<dbReference type="FunFam" id="3.30.40.100:FF:000003">
    <property type="entry name" value="MORC family CW-type zinc finger 3"/>
    <property type="match status" value="1"/>
</dbReference>
<dbReference type="FunFam" id="3.30.565.10:FF:000035">
    <property type="entry name" value="MORC family CW-type zinc finger protein 4"/>
    <property type="match status" value="1"/>
</dbReference>
<dbReference type="Gene3D" id="3.30.40.100">
    <property type="match status" value="1"/>
</dbReference>
<dbReference type="Gene3D" id="3.30.565.10">
    <property type="entry name" value="Histidine kinase-like ATPase, C-terminal domain"/>
    <property type="match status" value="1"/>
</dbReference>
<dbReference type="InterPro" id="IPR036890">
    <property type="entry name" value="HATPase_C_sf"/>
</dbReference>
<dbReference type="InterPro" id="IPR045261">
    <property type="entry name" value="MORC_ATPase"/>
</dbReference>
<dbReference type="InterPro" id="IPR041006">
    <property type="entry name" value="Morc_S5"/>
</dbReference>
<dbReference type="InterPro" id="IPR011124">
    <property type="entry name" value="Znf_CW"/>
</dbReference>
<dbReference type="PANTHER" id="PTHR23336:SF22">
    <property type="entry name" value="MORC FAMILY CW-TYPE ZINC FINGER PROTEIN 4"/>
    <property type="match status" value="1"/>
</dbReference>
<dbReference type="PANTHER" id="PTHR23336">
    <property type="entry name" value="ZINC FINGER CW-TYPE COILED-COIL DOMAIN PROTEIN 3"/>
    <property type="match status" value="1"/>
</dbReference>
<dbReference type="Pfam" id="PF13589">
    <property type="entry name" value="HATPase_c_3"/>
    <property type="match status" value="1"/>
</dbReference>
<dbReference type="Pfam" id="PF17942">
    <property type="entry name" value="Morc6_S5"/>
    <property type="match status" value="1"/>
</dbReference>
<dbReference type="Pfam" id="PF07496">
    <property type="entry name" value="zf-CW"/>
    <property type="match status" value="1"/>
</dbReference>
<dbReference type="SUPFAM" id="SSF55874">
    <property type="entry name" value="ATPase domain of HSP90 chaperone/DNA topoisomerase II/histidine kinase"/>
    <property type="match status" value="1"/>
</dbReference>
<dbReference type="PROSITE" id="PS51050">
    <property type="entry name" value="ZF_CW"/>
    <property type="match status" value="1"/>
</dbReference>